<name>TUSA_SHISS</name>
<comment type="function">
    <text evidence="1">Sulfur carrier protein involved in sulfur trafficking in the cell. Part of a sulfur-relay system required for 2-thiolation during synthesis of 2-thiouridine of the modified wobble base 5-methylaminomethyl-2-thiouridine (mnm(5)s(2)U) in tRNA. Interacts with IscS and stimulates its cysteine desulfurase activity. Accepts an activated sulfur from IscS, which is then transferred to TusD, and thus determines the direction of sulfur flow from IscS to 2-thiouridine formation. Also appears to be involved in sulfur transfer for the biosynthesis of molybdopterin.</text>
</comment>
<comment type="pathway">
    <text evidence="1">tRNA modification.</text>
</comment>
<comment type="subunit">
    <text evidence="1">Interacts with IscS.</text>
</comment>
<comment type="subcellular location">
    <subcellularLocation>
        <location evidence="1">Cytoplasm</location>
    </subcellularLocation>
</comment>
<comment type="similarity">
    <text evidence="1">Belongs to the sulfur carrier protein TusA family.</text>
</comment>
<proteinExistence type="inferred from homology"/>
<reference key="1">
    <citation type="journal article" date="2005" name="Nucleic Acids Res.">
        <title>Genome dynamics and diversity of Shigella species, the etiologic agents of bacillary dysentery.</title>
        <authorList>
            <person name="Yang F."/>
            <person name="Yang J."/>
            <person name="Zhang X."/>
            <person name="Chen L."/>
            <person name="Jiang Y."/>
            <person name="Yan Y."/>
            <person name="Tang X."/>
            <person name="Wang J."/>
            <person name="Xiong Z."/>
            <person name="Dong J."/>
            <person name="Xue Y."/>
            <person name="Zhu Y."/>
            <person name="Xu X."/>
            <person name="Sun L."/>
            <person name="Chen S."/>
            <person name="Nie H."/>
            <person name="Peng J."/>
            <person name="Xu J."/>
            <person name="Wang Y."/>
            <person name="Yuan Z."/>
            <person name="Wen Y."/>
            <person name="Yao Z."/>
            <person name="Shen Y."/>
            <person name="Qiang B."/>
            <person name="Hou Y."/>
            <person name="Yu J."/>
            <person name="Jin Q."/>
        </authorList>
    </citation>
    <scope>NUCLEOTIDE SEQUENCE [LARGE SCALE GENOMIC DNA]</scope>
    <source>
        <strain>Ss046</strain>
    </source>
</reference>
<keyword id="KW-0963">Cytoplasm</keyword>
<keyword id="KW-1185">Reference proteome</keyword>
<keyword id="KW-0819">tRNA processing</keyword>
<gene>
    <name evidence="1" type="primary">tusA</name>
    <name type="ordered locus">SSON_3708</name>
</gene>
<protein>
    <recommendedName>
        <fullName evidence="1">Sulfur carrier protein TusA</fullName>
    </recommendedName>
    <alternativeName>
        <fullName evidence="1">Sulfur mediator TusA</fullName>
    </alternativeName>
    <alternativeName>
        <fullName evidence="1">Sulfur transfer protein TusA</fullName>
    </alternativeName>
    <alternativeName>
        <fullName evidence="1">tRNA 2-thiouridine synthesizing protein A</fullName>
    </alternativeName>
</protein>
<organism>
    <name type="scientific">Shigella sonnei (strain Ss046)</name>
    <dbReference type="NCBI Taxonomy" id="300269"/>
    <lineage>
        <taxon>Bacteria</taxon>
        <taxon>Pseudomonadati</taxon>
        <taxon>Pseudomonadota</taxon>
        <taxon>Gammaproteobacteria</taxon>
        <taxon>Enterobacterales</taxon>
        <taxon>Enterobacteriaceae</taxon>
        <taxon>Shigella</taxon>
    </lineage>
</organism>
<accession>Q3YW58</accession>
<sequence length="81" mass="9095">MTDLFSSPDHTLDALGLRCPEPVMMVRKTVRNMQPGETLLIIADDPATTRDIPGFCTFMEHELVAKETDGLPYRYLIRKGG</sequence>
<feature type="chain" id="PRO_0000234126" description="Sulfur carrier protein TusA">
    <location>
        <begin position="1"/>
        <end position="81"/>
    </location>
</feature>
<feature type="active site" description="Cysteine persulfide intermediate" evidence="1">
    <location>
        <position position="19"/>
    </location>
</feature>
<dbReference type="EMBL" id="CP000038">
    <property type="protein sequence ID" value="AAZ90254.1"/>
    <property type="molecule type" value="Genomic_DNA"/>
</dbReference>
<dbReference type="RefSeq" id="WP_000130621.1">
    <property type="nucleotide sequence ID" value="NC_007384.1"/>
</dbReference>
<dbReference type="SMR" id="Q3YW58"/>
<dbReference type="GeneID" id="93778521"/>
<dbReference type="KEGG" id="ssn:SSON_3708"/>
<dbReference type="HOGENOM" id="CLU_165255_5_0_6"/>
<dbReference type="Proteomes" id="UP000002529">
    <property type="component" value="Chromosome"/>
</dbReference>
<dbReference type="GO" id="GO:0005737">
    <property type="term" value="C:cytoplasm"/>
    <property type="evidence" value="ECO:0007669"/>
    <property type="project" value="UniProtKB-SubCell"/>
</dbReference>
<dbReference type="GO" id="GO:0097163">
    <property type="term" value="F:sulfur carrier activity"/>
    <property type="evidence" value="ECO:0007669"/>
    <property type="project" value="UniProtKB-UniRule"/>
</dbReference>
<dbReference type="GO" id="GO:0002143">
    <property type="term" value="P:tRNA wobble position uridine thiolation"/>
    <property type="evidence" value="ECO:0007669"/>
    <property type="project" value="InterPro"/>
</dbReference>
<dbReference type="CDD" id="cd03423">
    <property type="entry name" value="SirA"/>
    <property type="match status" value="1"/>
</dbReference>
<dbReference type="FunFam" id="3.30.110.40:FF:000002">
    <property type="entry name" value="Sulfur carrier protein TusA"/>
    <property type="match status" value="1"/>
</dbReference>
<dbReference type="Gene3D" id="3.30.110.40">
    <property type="entry name" value="TusA-like domain"/>
    <property type="match status" value="1"/>
</dbReference>
<dbReference type="HAMAP" id="MF_00413">
    <property type="entry name" value="Thiourid_synth_A"/>
    <property type="match status" value="1"/>
</dbReference>
<dbReference type="InterPro" id="IPR022931">
    <property type="entry name" value="Sulphur_carrier_TusA"/>
</dbReference>
<dbReference type="InterPro" id="IPR001455">
    <property type="entry name" value="TusA-like"/>
</dbReference>
<dbReference type="InterPro" id="IPR036868">
    <property type="entry name" value="TusA-like_sf"/>
</dbReference>
<dbReference type="NCBIfam" id="NF001423">
    <property type="entry name" value="PRK00299.1"/>
    <property type="match status" value="1"/>
</dbReference>
<dbReference type="PANTHER" id="PTHR33279:SF2">
    <property type="entry name" value="SULFUR CARRIER PROTEIN TUSA"/>
    <property type="match status" value="1"/>
</dbReference>
<dbReference type="PANTHER" id="PTHR33279">
    <property type="entry name" value="SULFUR CARRIER PROTEIN YEDF-RELATED"/>
    <property type="match status" value="1"/>
</dbReference>
<dbReference type="Pfam" id="PF01206">
    <property type="entry name" value="TusA"/>
    <property type="match status" value="1"/>
</dbReference>
<dbReference type="SUPFAM" id="SSF64307">
    <property type="entry name" value="SirA-like"/>
    <property type="match status" value="1"/>
</dbReference>
<dbReference type="PROSITE" id="PS01148">
    <property type="entry name" value="UPF0033"/>
    <property type="match status" value="1"/>
</dbReference>
<evidence type="ECO:0000255" key="1">
    <source>
        <dbReference type="HAMAP-Rule" id="MF_00413"/>
    </source>
</evidence>